<evidence type="ECO:0000255" key="1">
    <source>
        <dbReference type="HAMAP-Rule" id="MF_01210"/>
    </source>
</evidence>
<reference key="1">
    <citation type="journal article" date="2001" name="J. Bacteriol.">
        <title>Genome sequence and comparative analysis of the solvent-producing bacterium Clostridium acetobutylicum.</title>
        <authorList>
            <person name="Noelling J."/>
            <person name="Breton G."/>
            <person name="Omelchenko M.V."/>
            <person name="Makarova K.S."/>
            <person name="Zeng Q."/>
            <person name="Gibson R."/>
            <person name="Lee H.M."/>
            <person name="Dubois J."/>
            <person name="Qiu D."/>
            <person name="Hitti J."/>
            <person name="Wolf Y.I."/>
            <person name="Tatusov R.L."/>
            <person name="Sabathe F."/>
            <person name="Doucette-Stamm L.A."/>
            <person name="Soucaille P."/>
            <person name="Daly M.J."/>
            <person name="Bennett G.N."/>
            <person name="Koonin E.V."/>
            <person name="Smith D.R."/>
        </authorList>
    </citation>
    <scope>NUCLEOTIDE SEQUENCE [LARGE SCALE GENOMIC DNA]</scope>
    <source>
        <strain>ATCC 824 / DSM 792 / JCM 1419 / IAM 19013 / LMG 5710 / NBRC 13948 / NRRL B-527 / VKM B-1787 / 2291 / W</strain>
    </source>
</reference>
<accession>Q97FT3</accession>
<comment type="function">
    <text evidence="1">Large subunit of the glutamine-dependent carbamoyl phosphate synthetase (CPSase). CPSase catalyzes the formation of carbamoyl phosphate from the ammonia moiety of glutamine, carbonate, and phosphate donated by ATP, constituting the first step of 2 biosynthetic pathways, one leading to arginine and/or urea and the other to pyrimidine nucleotides. The large subunit (synthetase) binds the substrates ammonia (free or transferred from glutamine from the small subunit), hydrogencarbonate and ATP and carries out an ATP-coupled ligase reaction, activating hydrogencarbonate by forming carboxy phosphate which reacts with ammonia to form carbamoyl phosphate.</text>
</comment>
<comment type="catalytic activity">
    <reaction evidence="1">
        <text>hydrogencarbonate + L-glutamine + 2 ATP + H2O = carbamoyl phosphate + L-glutamate + 2 ADP + phosphate + 2 H(+)</text>
        <dbReference type="Rhea" id="RHEA:18633"/>
        <dbReference type="ChEBI" id="CHEBI:15377"/>
        <dbReference type="ChEBI" id="CHEBI:15378"/>
        <dbReference type="ChEBI" id="CHEBI:17544"/>
        <dbReference type="ChEBI" id="CHEBI:29985"/>
        <dbReference type="ChEBI" id="CHEBI:30616"/>
        <dbReference type="ChEBI" id="CHEBI:43474"/>
        <dbReference type="ChEBI" id="CHEBI:58228"/>
        <dbReference type="ChEBI" id="CHEBI:58359"/>
        <dbReference type="ChEBI" id="CHEBI:456216"/>
        <dbReference type="EC" id="6.3.5.5"/>
    </reaction>
</comment>
<comment type="catalytic activity">
    <molecule>Carbamoyl phosphate synthase large chain</molecule>
    <reaction evidence="1">
        <text>hydrogencarbonate + NH4(+) + 2 ATP = carbamoyl phosphate + 2 ADP + phosphate + 2 H(+)</text>
        <dbReference type="Rhea" id="RHEA:18029"/>
        <dbReference type="ChEBI" id="CHEBI:15378"/>
        <dbReference type="ChEBI" id="CHEBI:17544"/>
        <dbReference type="ChEBI" id="CHEBI:28938"/>
        <dbReference type="ChEBI" id="CHEBI:30616"/>
        <dbReference type="ChEBI" id="CHEBI:43474"/>
        <dbReference type="ChEBI" id="CHEBI:58228"/>
        <dbReference type="ChEBI" id="CHEBI:456216"/>
        <dbReference type="EC" id="6.3.4.16"/>
    </reaction>
</comment>
<comment type="cofactor">
    <cofactor evidence="1">
        <name>Mg(2+)</name>
        <dbReference type="ChEBI" id="CHEBI:18420"/>
    </cofactor>
    <cofactor evidence="1">
        <name>Mn(2+)</name>
        <dbReference type="ChEBI" id="CHEBI:29035"/>
    </cofactor>
    <text evidence="1">Binds 4 Mg(2+) or Mn(2+) ions per subunit.</text>
</comment>
<comment type="pathway">
    <text evidence="1">Amino-acid biosynthesis; L-arginine biosynthesis; carbamoyl phosphate from bicarbonate: step 1/1.</text>
</comment>
<comment type="pathway">
    <text evidence="1">Pyrimidine metabolism; UMP biosynthesis via de novo pathway; (S)-dihydroorotate from bicarbonate: step 1/3.</text>
</comment>
<comment type="subunit">
    <text evidence="1">Composed of two chains; the small (or glutamine) chain promotes the hydrolysis of glutamine to ammonia, which is used by the large (or ammonia) chain to synthesize carbamoyl phosphate. Tetramer of heterodimers (alpha,beta)4.</text>
</comment>
<comment type="domain">
    <text evidence="1">The large subunit is composed of 2 ATP-grasp domains that are involved in binding the 2 ATP molecules needed for carbamoyl phosphate synthesis. The N-terminal ATP-grasp domain (referred to as the carboxyphosphate synthetic component) catalyzes the ATP-dependent phosphorylation of hydrogencarbonate to carboxyphosphate and the subsequent nucleophilic attack by ammonia to form a carbamate intermediate. The C-terminal ATP-grasp domain (referred to as the carbamoyl phosphate synthetic component) then catalyzes the phosphorylation of carbamate with the second ATP to form the end product carbamoyl phosphate. The reactive and unstable enzyme intermediates are sequentially channeled from one active site to the next through the interior of the protein over a distance of at least 96 A.</text>
</comment>
<comment type="similarity">
    <text evidence="1">Belongs to the CarB family.</text>
</comment>
<keyword id="KW-0028">Amino-acid biosynthesis</keyword>
<keyword id="KW-0055">Arginine biosynthesis</keyword>
<keyword id="KW-0067">ATP-binding</keyword>
<keyword id="KW-0436">Ligase</keyword>
<keyword id="KW-0460">Magnesium</keyword>
<keyword id="KW-0464">Manganese</keyword>
<keyword id="KW-0479">Metal-binding</keyword>
<keyword id="KW-0547">Nucleotide-binding</keyword>
<keyword id="KW-0665">Pyrimidine biosynthesis</keyword>
<keyword id="KW-1185">Reference proteome</keyword>
<keyword id="KW-0677">Repeat</keyword>
<dbReference type="EC" id="6.3.4.16" evidence="1"/>
<dbReference type="EC" id="6.3.5.5" evidence="1"/>
<dbReference type="EMBL" id="AE001437">
    <property type="protein sequence ID" value="AAK80591.1"/>
    <property type="molecule type" value="Genomic_DNA"/>
</dbReference>
<dbReference type="PIR" id="D97225">
    <property type="entry name" value="D97225"/>
</dbReference>
<dbReference type="RefSeq" id="NP_349251.1">
    <property type="nucleotide sequence ID" value="NC_003030.1"/>
</dbReference>
<dbReference type="RefSeq" id="WP_010965932.1">
    <property type="nucleotide sequence ID" value="NC_003030.1"/>
</dbReference>
<dbReference type="SMR" id="Q97FT3"/>
<dbReference type="STRING" id="272562.CA_C2644"/>
<dbReference type="KEGG" id="cac:CA_C2644"/>
<dbReference type="PATRIC" id="fig|272562.8.peg.2833"/>
<dbReference type="eggNOG" id="COG0458">
    <property type="taxonomic scope" value="Bacteria"/>
</dbReference>
<dbReference type="HOGENOM" id="CLU_000513_1_3_9"/>
<dbReference type="OrthoDB" id="9804197at2"/>
<dbReference type="UniPathway" id="UPA00068">
    <property type="reaction ID" value="UER00171"/>
</dbReference>
<dbReference type="UniPathway" id="UPA00070">
    <property type="reaction ID" value="UER00115"/>
</dbReference>
<dbReference type="Proteomes" id="UP000000814">
    <property type="component" value="Chromosome"/>
</dbReference>
<dbReference type="GO" id="GO:0005737">
    <property type="term" value="C:cytoplasm"/>
    <property type="evidence" value="ECO:0007669"/>
    <property type="project" value="TreeGrafter"/>
</dbReference>
<dbReference type="GO" id="GO:0005524">
    <property type="term" value="F:ATP binding"/>
    <property type="evidence" value="ECO:0007669"/>
    <property type="project" value="UniProtKB-UniRule"/>
</dbReference>
<dbReference type="GO" id="GO:0004087">
    <property type="term" value="F:carbamoyl-phosphate synthase (ammonia) activity"/>
    <property type="evidence" value="ECO:0007669"/>
    <property type="project" value="RHEA"/>
</dbReference>
<dbReference type="GO" id="GO:0004088">
    <property type="term" value="F:carbamoyl-phosphate synthase (glutamine-hydrolyzing) activity"/>
    <property type="evidence" value="ECO:0007669"/>
    <property type="project" value="UniProtKB-UniRule"/>
</dbReference>
<dbReference type="GO" id="GO:0046872">
    <property type="term" value="F:metal ion binding"/>
    <property type="evidence" value="ECO:0007669"/>
    <property type="project" value="UniProtKB-KW"/>
</dbReference>
<dbReference type="GO" id="GO:0044205">
    <property type="term" value="P:'de novo' UMP biosynthetic process"/>
    <property type="evidence" value="ECO:0007669"/>
    <property type="project" value="UniProtKB-UniRule"/>
</dbReference>
<dbReference type="GO" id="GO:0006541">
    <property type="term" value="P:glutamine metabolic process"/>
    <property type="evidence" value="ECO:0007669"/>
    <property type="project" value="TreeGrafter"/>
</dbReference>
<dbReference type="GO" id="GO:0006526">
    <property type="term" value="P:L-arginine biosynthetic process"/>
    <property type="evidence" value="ECO:0007669"/>
    <property type="project" value="UniProtKB-UniRule"/>
</dbReference>
<dbReference type="CDD" id="cd01424">
    <property type="entry name" value="MGS_CPS_II"/>
    <property type="match status" value="1"/>
</dbReference>
<dbReference type="FunFam" id="1.10.1030.10:FF:000002">
    <property type="entry name" value="Carbamoyl-phosphate synthase large chain"/>
    <property type="match status" value="1"/>
</dbReference>
<dbReference type="FunFam" id="3.30.1490.20:FF:000001">
    <property type="entry name" value="Carbamoyl-phosphate synthase large chain"/>
    <property type="match status" value="1"/>
</dbReference>
<dbReference type="FunFam" id="3.30.470.20:FF:000001">
    <property type="entry name" value="Carbamoyl-phosphate synthase large chain"/>
    <property type="match status" value="1"/>
</dbReference>
<dbReference type="FunFam" id="3.30.470.20:FF:000026">
    <property type="entry name" value="Carbamoyl-phosphate synthase large chain"/>
    <property type="match status" value="1"/>
</dbReference>
<dbReference type="FunFam" id="3.40.50.20:FF:000001">
    <property type="entry name" value="Carbamoyl-phosphate synthase large chain"/>
    <property type="match status" value="1"/>
</dbReference>
<dbReference type="FunFam" id="3.40.50.20:FF:000002">
    <property type="entry name" value="Carbamoyl-phosphate synthase large chain"/>
    <property type="match status" value="1"/>
</dbReference>
<dbReference type="Gene3D" id="3.40.50.20">
    <property type="match status" value="2"/>
</dbReference>
<dbReference type="Gene3D" id="3.30.1490.20">
    <property type="entry name" value="ATP-grasp fold, A domain"/>
    <property type="match status" value="1"/>
</dbReference>
<dbReference type="Gene3D" id="3.30.470.20">
    <property type="entry name" value="ATP-grasp fold, B domain"/>
    <property type="match status" value="2"/>
</dbReference>
<dbReference type="Gene3D" id="1.10.1030.10">
    <property type="entry name" value="Carbamoyl-phosphate synthetase, large subunit oligomerisation domain"/>
    <property type="match status" value="1"/>
</dbReference>
<dbReference type="Gene3D" id="3.40.50.1380">
    <property type="entry name" value="Methylglyoxal synthase-like domain"/>
    <property type="match status" value="1"/>
</dbReference>
<dbReference type="HAMAP" id="MF_01210_A">
    <property type="entry name" value="CPSase_L_chain_A"/>
    <property type="match status" value="1"/>
</dbReference>
<dbReference type="HAMAP" id="MF_01210_B">
    <property type="entry name" value="CPSase_L_chain_B"/>
    <property type="match status" value="1"/>
</dbReference>
<dbReference type="InterPro" id="IPR011761">
    <property type="entry name" value="ATP-grasp"/>
</dbReference>
<dbReference type="InterPro" id="IPR013815">
    <property type="entry name" value="ATP_grasp_subdomain_1"/>
</dbReference>
<dbReference type="InterPro" id="IPR006275">
    <property type="entry name" value="CarbamoylP_synth_lsu"/>
</dbReference>
<dbReference type="InterPro" id="IPR005480">
    <property type="entry name" value="CarbamoylP_synth_lsu_oligo"/>
</dbReference>
<dbReference type="InterPro" id="IPR036897">
    <property type="entry name" value="CarbamoylP_synth_lsu_oligo_sf"/>
</dbReference>
<dbReference type="InterPro" id="IPR005479">
    <property type="entry name" value="CbamoylP_synth_lsu-like_ATP-bd"/>
</dbReference>
<dbReference type="InterPro" id="IPR005483">
    <property type="entry name" value="CbamoylP_synth_lsu_CPSase_dom"/>
</dbReference>
<dbReference type="InterPro" id="IPR011607">
    <property type="entry name" value="MGS-like_dom"/>
</dbReference>
<dbReference type="InterPro" id="IPR036914">
    <property type="entry name" value="MGS-like_dom_sf"/>
</dbReference>
<dbReference type="InterPro" id="IPR033937">
    <property type="entry name" value="MGS_CPS_CarB"/>
</dbReference>
<dbReference type="InterPro" id="IPR016185">
    <property type="entry name" value="PreATP-grasp_dom_sf"/>
</dbReference>
<dbReference type="NCBIfam" id="TIGR01369">
    <property type="entry name" value="CPSaseII_lrg"/>
    <property type="match status" value="1"/>
</dbReference>
<dbReference type="NCBIfam" id="NF003671">
    <property type="entry name" value="PRK05294.1"/>
    <property type="match status" value="1"/>
</dbReference>
<dbReference type="NCBIfam" id="NF009455">
    <property type="entry name" value="PRK12815.1"/>
    <property type="match status" value="1"/>
</dbReference>
<dbReference type="PANTHER" id="PTHR11405:SF53">
    <property type="entry name" value="CARBAMOYL-PHOSPHATE SYNTHASE [AMMONIA], MITOCHONDRIAL"/>
    <property type="match status" value="1"/>
</dbReference>
<dbReference type="PANTHER" id="PTHR11405">
    <property type="entry name" value="CARBAMOYLTRANSFERASE FAMILY MEMBER"/>
    <property type="match status" value="1"/>
</dbReference>
<dbReference type="Pfam" id="PF02786">
    <property type="entry name" value="CPSase_L_D2"/>
    <property type="match status" value="2"/>
</dbReference>
<dbReference type="Pfam" id="PF02787">
    <property type="entry name" value="CPSase_L_D3"/>
    <property type="match status" value="1"/>
</dbReference>
<dbReference type="Pfam" id="PF02142">
    <property type="entry name" value="MGS"/>
    <property type="match status" value="1"/>
</dbReference>
<dbReference type="PRINTS" id="PR00098">
    <property type="entry name" value="CPSASE"/>
</dbReference>
<dbReference type="SMART" id="SM01096">
    <property type="entry name" value="CPSase_L_D3"/>
    <property type="match status" value="1"/>
</dbReference>
<dbReference type="SMART" id="SM00851">
    <property type="entry name" value="MGS"/>
    <property type="match status" value="1"/>
</dbReference>
<dbReference type="SUPFAM" id="SSF48108">
    <property type="entry name" value="Carbamoyl phosphate synthetase, large subunit connection domain"/>
    <property type="match status" value="1"/>
</dbReference>
<dbReference type="SUPFAM" id="SSF56059">
    <property type="entry name" value="Glutathione synthetase ATP-binding domain-like"/>
    <property type="match status" value="2"/>
</dbReference>
<dbReference type="SUPFAM" id="SSF52335">
    <property type="entry name" value="Methylglyoxal synthase-like"/>
    <property type="match status" value="1"/>
</dbReference>
<dbReference type="SUPFAM" id="SSF52440">
    <property type="entry name" value="PreATP-grasp domain"/>
    <property type="match status" value="2"/>
</dbReference>
<dbReference type="PROSITE" id="PS50975">
    <property type="entry name" value="ATP_GRASP"/>
    <property type="match status" value="2"/>
</dbReference>
<dbReference type="PROSITE" id="PS00866">
    <property type="entry name" value="CPSASE_1"/>
    <property type="match status" value="1"/>
</dbReference>
<dbReference type="PROSITE" id="PS00867">
    <property type="entry name" value="CPSASE_2"/>
    <property type="match status" value="2"/>
</dbReference>
<dbReference type="PROSITE" id="PS51855">
    <property type="entry name" value="MGS"/>
    <property type="match status" value="1"/>
</dbReference>
<name>CARB_CLOAB</name>
<sequence>MPLDKTIKKVLIIGSGPNNIGQAAEFDYSGTQACKAVKEEGIETVLVNSNPATIMTDSHIADKVYIEPLTEEAVEKIIEKERPDGILAGFGGQTALNLAMNLNDAGVLDKYNVRLLGINSEAIKKAEDREEFKNLMEEIDEPVPKSIIATHIDECIDFVNKFGLPVIIRPAFTLGGTGGGIASTMEELKEICDRGIKMSPIGQILLEQSVAGWKELEYEVMRDAKDNCIIVCNMENLDPVGVHTGDSIVTAPSQTLTDKEYHMLRHSALKIIRNLKIEGGCNIQFALNPKSNDYIVIEVNPRVSRSSALASKAAGYPIAKIAAKIAVGYSLDELKNYVTKNSSACFEPALDYVVVKIPKWPFDKFNTAERHLGTQMKATGEVMAIDRDFESALLKAVTSLEGKISGLRLEKFEYTTVRELLEKIKKQDDERIFAIAEAFRRGVDVKQIHEVTEIDNWYLNGINRIIDMEKELQDKNNKDKDKSIIKAKKMGFTVAEIARITSLEEGKIKNILNVNNVKPVFKMVDTCSGEFEAETPYYYSSYENEDENEVTDDKKIVVIGSGPIRIGQGIEFDYCCVHGVWAIKEAGYKSIIINNNPETVSTDFDTADKLYFESLYIDNVMNIIEKEKPEGVIVQFGGQTAINLADKLYKNGVKILGTSFESIDLAEDREKFSELLKELNIPQAKGMAVTSMEEAYEAVKEIGYPVIVRPSYVIGGRAMQVVYDKLALQKYMTEAVTLSTEHPVLIDKYIKGTEIEVDTISDGENILIPGIMEHIERTGVHSGDSITMYPYHTLPKEVVDKLVKYTKSLAKALEVKGLMNIQYVYDGENVYVIEVNPRASRTVPILSKVTGVPMVKLAVEILTGKNLKELGYGVDLKKDNKLYAVKVPVFSNEKLANVDIYLGPEMRSTGEVMGIDSDFEVAIYKGFRAAGIEVPKDGGNLYVSIKDVDKQESVPIIKKYTEFGYKIYASLGTGKFLQKQGIDCEVLRTDDLMKAIGDGKINLIINSPTRGNTVGTRGFSIRRKAAEYKVGAFTCIDTAKAFLTAIKVKREEAKVEYRAMKEYFK</sequence>
<protein>
    <recommendedName>
        <fullName evidence="1">Carbamoyl phosphate synthase large chain</fullName>
        <ecNumber evidence="1">6.3.4.16</ecNumber>
        <ecNumber evidence="1">6.3.5.5</ecNumber>
    </recommendedName>
    <alternativeName>
        <fullName evidence="1">Carbamoyl phosphate synthetase ammonia chain</fullName>
    </alternativeName>
</protein>
<feature type="chain" id="PRO_0000145001" description="Carbamoyl phosphate synthase large chain">
    <location>
        <begin position="1"/>
        <end position="1065"/>
    </location>
</feature>
<feature type="domain" description="ATP-grasp 1" evidence="1">
    <location>
        <begin position="133"/>
        <end position="327"/>
    </location>
</feature>
<feature type="domain" description="ATP-grasp 2" evidence="1">
    <location>
        <begin position="673"/>
        <end position="863"/>
    </location>
</feature>
<feature type="domain" description="MGS-like" evidence="1">
    <location>
        <begin position="932"/>
        <end position="1065"/>
    </location>
</feature>
<feature type="region of interest" description="Carboxyphosphate synthetic domain" evidence="1">
    <location>
        <begin position="1"/>
        <end position="401"/>
    </location>
</feature>
<feature type="region of interest" description="Oligomerization domain" evidence="1">
    <location>
        <begin position="402"/>
        <end position="548"/>
    </location>
</feature>
<feature type="region of interest" description="Carbamoyl phosphate synthetic domain" evidence="1">
    <location>
        <begin position="549"/>
        <end position="931"/>
    </location>
</feature>
<feature type="region of interest" description="Allosteric domain" evidence="1">
    <location>
        <begin position="932"/>
        <end position="1065"/>
    </location>
</feature>
<feature type="binding site" evidence="1">
    <location>
        <position position="129"/>
    </location>
    <ligand>
        <name>ATP</name>
        <dbReference type="ChEBI" id="CHEBI:30616"/>
        <label>1</label>
    </ligand>
</feature>
<feature type="binding site" evidence="1">
    <location>
        <position position="169"/>
    </location>
    <ligand>
        <name>ATP</name>
        <dbReference type="ChEBI" id="CHEBI:30616"/>
        <label>1</label>
    </ligand>
</feature>
<feature type="binding site" evidence="1">
    <location>
        <position position="175"/>
    </location>
    <ligand>
        <name>ATP</name>
        <dbReference type="ChEBI" id="CHEBI:30616"/>
        <label>1</label>
    </ligand>
</feature>
<feature type="binding site" evidence="1">
    <location>
        <position position="176"/>
    </location>
    <ligand>
        <name>ATP</name>
        <dbReference type="ChEBI" id="CHEBI:30616"/>
        <label>1</label>
    </ligand>
</feature>
<feature type="binding site" evidence="1">
    <location>
        <position position="208"/>
    </location>
    <ligand>
        <name>ATP</name>
        <dbReference type="ChEBI" id="CHEBI:30616"/>
        <label>1</label>
    </ligand>
</feature>
<feature type="binding site" evidence="1">
    <location>
        <position position="210"/>
    </location>
    <ligand>
        <name>ATP</name>
        <dbReference type="ChEBI" id="CHEBI:30616"/>
        <label>1</label>
    </ligand>
</feature>
<feature type="binding site" evidence="1">
    <location>
        <position position="215"/>
    </location>
    <ligand>
        <name>ATP</name>
        <dbReference type="ChEBI" id="CHEBI:30616"/>
        <label>1</label>
    </ligand>
</feature>
<feature type="binding site" evidence="1">
    <location>
        <position position="241"/>
    </location>
    <ligand>
        <name>ATP</name>
        <dbReference type="ChEBI" id="CHEBI:30616"/>
        <label>1</label>
    </ligand>
</feature>
<feature type="binding site" evidence="1">
    <location>
        <position position="242"/>
    </location>
    <ligand>
        <name>ATP</name>
        <dbReference type="ChEBI" id="CHEBI:30616"/>
        <label>1</label>
    </ligand>
</feature>
<feature type="binding site" evidence="1">
    <location>
        <position position="243"/>
    </location>
    <ligand>
        <name>ATP</name>
        <dbReference type="ChEBI" id="CHEBI:30616"/>
        <label>1</label>
    </ligand>
</feature>
<feature type="binding site" evidence="1">
    <location>
        <position position="284"/>
    </location>
    <ligand>
        <name>ATP</name>
        <dbReference type="ChEBI" id="CHEBI:30616"/>
        <label>1</label>
    </ligand>
</feature>
<feature type="binding site" evidence="1">
    <location>
        <position position="284"/>
    </location>
    <ligand>
        <name>Mg(2+)</name>
        <dbReference type="ChEBI" id="CHEBI:18420"/>
        <label>1</label>
    </ligand>
</feature>
<feature type="binding site" evidence="1">
    <location>
        <position position="284"/>
    </location>
    <ligand>
        <name>Mn(2+)</name>
        <dbReference type="ChEBI" id="CHEBI:29035"/>
        <label>1</label>
    </ligand>
</feature>
<feature type="binding site" evidence="1">
    <location>
        <position position="298"/>
    </location>
    <ligand>
        <name>ATP</name>
        <dbReference type="ChEBI" id="CHEBI:30616"/>
        <label>1</label>
    </ligand>
</feature>
<feature type="binding site" evidence="1">
    <location>
        <position position="298"/>
    </location>
    <ligand>
        <name>Mg(2+)</name>
        <dbReference type="ChEBI" id="CHEBI:18420"/>
        <label>1</label>
    </ligand>
</feature>
<feature type="binding site" evidence="1">
    <location>
        <position position="298"/>
    </location>
    <ligand>
        <name>Mg(2+)</name>
        <dbReference type="ChEBI" id="CHEBI:18420"/>
        <label>2</label>
    </ligand>
</feature>
<feature type="binding site" evidence="1">
    <location>
        <position position="298"/>
    </location>
    <ligand>
        <name>Mn(2+)</name>
        <dbReference type="ChEBI" id="CHEBI:29035"/>
        <label>1</label>
    </ligand>
</feature>
<feature type="binding site" evidence="1">
    <location>
        <position position="298"/>
    </location>
    <ligand>
        <name>Mn(2+)</name>
        <dbReference type="ChEBI" id="CHEBI:29035"/>
        <label>2</label>
    </ligand>
</feature>
<feature type="binding site" evidence="1">
    <location>
        <position position="300"/>
    </location>
    <ligand>
        <name>Mg(2+)</name>
        <dbReference type="ChEBI" id="CHEBI:18420"/>
        <label>2</label>
    </ligand>
</feature>
<feature type="binding site" evidence="1">
    <location>
        <position position="300"/>
    </location>
    <ligand>
        <name>Mn(2+)</name>
        <dbReference type="ChEBI" id="CHEBI:29035"/>
        <label>2</label>
    </ligand>
</feature>
<feature type="binding site" evidence="1">
    <location>
        <position position="709"/>
    </location>
    <ligand>
        <name>ATP</name>
        <dbReference type="ChEBI" id="CHEBI:30616"/>
        <label>2</label>
    </ligand>
</feature>
<feature type="binding site" evidence="1">
    <location>
        <position position="748"/>
    </location>
    <ligand>
        <name>ATP</name>
        <dbReference type="ChEBI" id="CHEBI:30616"/>
        <label>2</label>
    </ligand>
</feature>
<feature type="binding site" evidence="1">
    <location>
        <position position="750"/>
    </location>
    <ligand>
        <name>ATP</name>
        <dbReference type="ChEBI" id="CHEBI:30616"/>
        <label>2</label>
    </ligand>
</feature>
<feature type="binding site" evidence="1">
    <location>
        <position position="754"/>
    </location>
    <ligand>
        <name>ATP</name>
        <dbReference type="ChEBI" id="CHEBI:30616"/>
        <label>2</label>
    </ligand>
</feature>
<feature type="binding site" evidence="1">
    <location>
        <position position="779"/>
    </location>
    <ligand>
        <name>ATP</name>
        <dbReference type="ChEBI" id="CHEBI:30616"/>
        <label>2</label>
    </ligand>
</feature>
<feature type="binding site" evidence="1">
    <location>
        <position position="780"/>
    </location>
    <ligand>
        <name>ATP</name>
        <dbReference type="ChEBI" id="CHEBI:30616"/>
        <label>2</label>
    </ligand>
</feature>
<feature type="binding site" evidence="1">
    <location>
        <position position="781"/>
    </location>
    <ligand>
        <name>ATP</name>
        <dbReference type="ChEBI" id="CHEBI:30616"/>
        <label>2</label>
    </ligand>
</feature>
<feature type="binding site" evidence="1">
    <location>
        <position position="782"/>
    </location>
    <ligand>
        <name>ATP</name>
        <dbReference type="ChEBI" id="CHEBI:30616"/>
        <label>2</label>
    </ligand>
</feature>
<feature type="binding site" evidence="1">
    <location>
        <position position="822"/>
    </location>
    <ligand>
        <name>ATP</name>
        <dbReference type="ChEBI" id="CHEBI:30616"/>
        <label>2</label>
    </ligand>
</feature>
<feature type="binding site" evidence="1">
    <location>
        <position position="822"/>
    </location>
    <ligand>
        <name>Mg(2+)</name>
        <dbReference type="ChEBI" id="CHEBI:18420"/>
        <label>3</label>
    </ligand>
</feature>
<feature type="binding site" evidence="1">
    <location>
        <position position="822"/>
    </location>
    <ligand>
        <name>Mn(2+)</name>
        <dbReference type="ChEBI" id="CHEBI:29035"/>
        <label>3</label>
    </ligand>
</feature>
<feature type="binding site" evidence="1">
    <location>
        <position position="834"/>
    </location>
    <ligand>
        <name>ATP</name>
        <dbReference type="ChEBI" id="CHEBI:30616"/>
        <label>2</label>
    </ligand>
</feature>
<feature type="binding site" evidence="1">
    <location>
        <position position="834"/>
    </location>
    <ligand>
        <name>Mg(2+)</name>
        <dbReference type="ChEBI" id="CHEBI:18420"/>
        <label>3</label>
    </ligand>
</feature>
<feature type="binding site" evidence="1">
    <location>
        <position position="834"/>
    </location>
    <ligand>
        <name>Mg(2+)</name>
        <dbReference type="ChEBI" id="CHEBI:18420"/>
        <label>4</label>
    </ligand>
</feature>
<feature type="binding site" evidence="1">
    <location>
        <position position="834"/>
    </location>
    <ligand>
        <name>Mn(2+)</name>
        <dbReference type="ChEBI" id="CHEBI:29035"/>
        <label>3</label>
    </ligand>
</feature>
<feature type="binding site" evidence="1">
    <location>
        <position position="834"/>
    </location>
    <ligand>
        <name>Mn(2+)</name>
        <dbReference type="ChEBI" id="CHEBI:29035"/>
        <label>4</label>
    </ligand>
</feature>
<feature type="binding site" evidence="1">
    <location>
        <position position="836"/>
    </location>
    <ligand>
        <name>Mg(2+)</name>
        <dbReference type="ChEBI" id="CHEBI:18420"/>
        <label>4</label>
    </ligand>
</feature>
<feature type="binding site" evidence="1">
    <location>
        <position position="836"/>
    </location>
    <ligand>
        <name>Mn(2+)</name>
        <dbReference type="ChEBI" id="CHEBI:29035"/>
        <label>4</label>
    </ligand>
</feature>
<gene>
    <name evidence="1" type="primary">carB</name>
    <name type="ordered locus">CA_C2644</name>
</gene>
<organism>
    <name type="scientific">Clostridium acetobutylicum (strain ATCC 824 / DSM 792 / JCM 1419 / IAM 19013 / LMG 5710 / NBRC 13948 / NRRL B-527 / VKM B-1787 / 2291 / W)</name>
    <dbReference type="NCBI Taxonomy" id="272562"/>
    <lineage>
        <taxon>Bacteria</taxon>
        <taxon>Bacillati</taxon>
        <taxon>Bacillota</taxon>
        <taxon>Clostridia</taxon>
        <taxon>Eubacteriales</taxon>
        <taxon>Clostridiaceae</taxon>
        <taxon>Clostridium</taxon>
    </lineage>
</organism>
<proteinExistence type="inferred from homology"/>